<reference evidence="2" key="1">
    <citation type="journal article" date="2009" name="Rapid Commun. Mass Spectrom.">
        <title>The host-defence skin peptide profiles of Peron's Tree Frog Litoria peronii in winter and summer. Sequence determination by electrospray mass spectrometry and activities of the peptides.</title>
        <authorList>
            <person name="Bilusich D."/>
            <person name="Jackway R.J."/>
            <person name="Musgrave I.F."/>
            <person name="Tyler M.J."/>
            <person name="Bowie J.H."/>
        </authorList>
    </citation>
    <scope>PROTEIN SEQUENCE</scope>
    <scope>SUBCELLULAR LOCATION</scope>
    <scope>TISSUE SPECIFICITY</scope>
    <scope>MASS SPECTROMETRY</scope>
    <scope>AMIDATION AT VAL-13</scope>
    <source>
        <tissue evidence="1">Skin secretion</tissue>
    </source>
</reference>
<evidence type="ECO:0000269" key="1">
    <source>
    </source>
</evidence>
<evidence type="ECO:0000305" key="2"/>
<keyword id="KW-0027">Amidation</keyword>
<keyword id="KW-0878">Amphibian defense peptide</keyword>
<keyword id="KW-0903">Direct protein sequencing</keyword>
<keyword id="KW-0964">Secreted</keyword>
<protein>
    <recommendedName>
        <fullName>Peroniin-1.2a</fullName>
    </recommendedName>
</protein>
<proteinExistence type="evidence at protein level"/>
<name>PE12A_LITPE</name>
<feature type="peptide" id="PRO_0000394182" description="Peroniin-1.2a">
    <location>
        <begin position="1"/>
        <end position="13"/>
    </location>
</feature>
<feature type="modified residue" description="Valine amide" evidence="1">
    <location>
        <position position="13"/>
    </location>
</feature>
<comment type="subcellular location">
    <subcellularLocation>
        <location evidence="1">Secreted</location>
    </subcellularLocation>
</comment>
<comment type="tissue specificity">
    <text evidence="1">Expressed by the skin dorsal glands.</text>
</comment>
<comment type="mass spectrometry"/>
<comment type="similarity">
    <text evidence="2">Belongs to the frog skin active peptide (FSAP) family. Peroniin subfamily.</text>
</comment>
<sequence>DAQEKRQPWIPFV</sequence>
<accession>P86490</accession>
<organism>
    <name type="scientific">Litoria peronii</name>
    <name type="common">Emerald spotted tree frog</name>
    <name type="synonym">Hyla peronii</name>
    <dbReference type="NCBI Taxonomy" id="317363"/>
    <lineage>
        <taxon>Eukaryota</taxon>
        <taxon>Metazoa</taxon>
        <taxon>Chordata</taxon>
        <taxon>Craniata</taxon>
        <taxon>Vertebrata</taxon>
        <taxon>Euteleostomi</taxon>
        <taxon>Amphibia</taxon>
        <taxon>Batrachia</taxon>
        <taxon>Anura</taxon>
        <taxon>Neobatrachia</taxon>
        <taxon>Hyloidea</taxon>
        <taxon>Hylidae</taxon>
        <taxon>Pelodryadinae</taxon>
        <taxon>Litoria</taxon>
    </lineage>
</organism>
<dbReference type="GO" id="GO:0005576">
    <property type="term" value="C:extracellular region"/>
    <property type="evidence" value="ECO:0000314"/>
    <property type="project" value="UniProtKB"/>
</dbReference>
<dbReference type="GO" id="GO:0006952">
    <property type="term" value="P:defense response"/>
    <property type="evidence" value="ECO:0007669"/>
    <property type="project" value="UniProtKB-KW"/>
</dbReference>